<proteinExistence type="inferred from homology"/>
<dbReference type="EC" id="7.1.1.-"/>
<dbReference type="EMBL" id="DQ231562">
    <property type="protein sequence ID" value="ABB90085.1"/>
    <property type="molecule type" value="Genomic_DNA"/>
</dbReference>
<dbReference type="EMBL" id="DQ386163">
    <property type="protein sequence ID" value="ABD47104.1"/>
    <property type="molecule type" value="Genomic_DNA"/>
</dbReference>
<dbReference type="RefSeq" id="YP_635686.1">
    <property type="nucleotide sequence ID" value="NC_008096.2"/>
</dbReference>
<dbReference type="SMR" id="Q2VED3"/>
<dbReference type="FunCoup" id="Q2VED3">
    <property type="interactions" value="8"/>
</dbReference>
<dbReference type="STRING" id="4113.Q2VED3"/>
<dbReference type="PaxDb" id="4113-PGSC0003DMT400074606"/>
<dbReference type="GeneID" id="4099901"/>
<dbReference type="KEGG" id="sot:4099901"/>
<dbReference type="eggNOG" id="KOG4668">
    <property type="taxonomic scope" value="Eukaryota"/>
</dbReference>
<dbReference type="InParanoid" id="Q2VED3"/>
<dbReference type="OrthoDB" id="543408at2759"/>
<dbReference type="Proteomes" id="UP000011115">
    <property type="component" value="Unassembled WGS sequence"/>
</dbReference>
<dbReference type="GO" id="GO:0009535">
    <property type="term" value="C:chloroplast thylakoid membrane"/>
    <property type="evidence" value="ECO:0007669"/>
    <property type="project" value="UniProtKB-SubCell"/>
</dbReference>
<dbReference type="GO" id="GO:0008137">
    <property type="term" value="F:NADH dehydrogenase (ubiquinone) activity"/>
    <property type="evidence" value="ECO:0007669"/>
    <property type="project" value="InterPro"/>
</dbReference>
<dbReference type="GO" id="GO:0048038">
    <property type="term" value="F:quinone binding"/>
    <property type="evidence" value="ECO:0007669"/>
    <property type="project" value="UniProtKB-KW"/>
</dbReference>
<dbReference type="GO" id="GO:0042773">
    <property type="term" value="P:ATP synthesis coupled electron transport"/>
    <property type="evidence" value="ECO:0007669"/>
    <property type="project" value="InterPro"/>
</dbReference>
<dbReference type="GO" id="GO:0015990">
    <property type="term" value="P:electron transport coupled proton transport"/>
    <property type="evidence" value="ECO:0000318"/>
    <property type="project" value="GO_Central"/>
</dbReference>
<dbReference type="Gene3D" id="1.20.5.2700">
    <property type="match status" value="1"/>
</dbReference>
<dbReference type="InterPro" id="IPR002128">
    <property type="entry name" value="NADH_UbQ_OxRdtase_chlpt_su5_C"/>
</dbReference>
<dbReference type="InterPro" id="IPR018393">
    <property type="entry name" value="NADHpl_OxRdtase_5_subgr"/>
</dbReference>
<dbReference type="InterPro" id="IPR001750">
    <property type="entry name" value="ND/Mrp_TM"/>
</dbReference>
<dbReference type="InterPro" id="IPR003945">
    <property type="entry name" value="NU5C-like"/>
</dbReference>
<dbReference type="InterPro" id="IPR001516">
    <property type="entry name" value="Proton_antipo_N"/>
</dbReference>
<dbReference type="NCBIfam" id="TIGR01974">
    <property type="entry name" value="NDH_I_L"/>
    <property type="match status" value="1"/>
</dbReference>
<dbReference type="NCBIfam" id="NF005141">
    <property type="entry name" value="PRK06590.1"/>
    <property type="match status" value="1"/>
</dbReference>
<dbReference type="PANTHER" id="PTHR42829">
    <property type="entry name" value="NADH-UBIQUINONE OXIDOREDUCTASE CHAIN 5"/>
    <property type="match status" value="1"/>
</dbReference>
<dbReference type="PANTHER" id="PTHR42829:SF2">
    <property type="entry name" value="NADH-UBIQUINONE OXIDOREDUCTASE CHAIN 5"/>
    <property type="match status" value="1"/>
</dbReference>
<dbReference type="Pfam" id="PF01010">
    <property type="entry name" value="Proton_antipo_C"/>
    <property type="match status" value="1"/>
</dbReference>
<dbReference type="Pfam" id="PF00361">
    <property type="entry name" value="Proton_antipo_M"/>
    <property type="match status" value="1"/>
</dbReference>
<dbReference type="Pfam" id="PF00662">
    <property type="entry name" value="Proton_antipo_N"/>
    <property type="match status" value="1"/>
</dbReference>
<dbReference type="PRINTS" id="PR01434">
    <property type="entry name" value="NADHDHGNASE5"/>
</dbReference>
<dbReference type="PRINTS" id="PR01435">
    <property type="entry name" value="NPOXDRDTASE5"/>
</dbReference>
<evidence type="ECO:0000250" key="1"/>
<evidence type="ECO:0000255" key="2"/>
<evidence type="ECO:0000305" key="3"/>
<protein>
    <recommendedName>
        <fullName>NAD(P)H-quinone oxidoreductase subunit 5, chloroplastic</fullName>
        <ecNumber>7.1.1.-</ecNumber>
    </recommendedName>
    <alternativeName>
        <fullName>NAD(P)H dehydrogenase subunit 5</fullName>
    </alternativeName>
    <alternativeName>
        <fullName>NADH-plastoquinone oxidoreductase subunit 5</fullName>
    </alternativeName>
</protein>
<geneLocation type="chloroplast"/>
<feature type="chain" id="PRO_0000277572" description="NAD(P)H-quinone oxidoreductase subunit 5, chloroplastic">
    <location>
        <begin position="1"/>
        <end position="739"/>
    </location>
</feature>
<feature type="transmembrane region" description="Helical" evidence="2">
    <location>
        <begin position="9"/>
        <end position="29"/>
    </location>
</feature>
<feature type="transmembrane region" description="Helical" evidence="2">
    <location>
        <begin position="40"/>
        <end position="60"/>
    </location>
</feature>
<feature type="transmembrane region" description="Helical" evidence="2">
    <location>
        <begin position="89"/>
        <end position="109"/>
    </location>
</feature>
<feature type="transmembrane region" description="Helical" evidence="2">
    <location>
        <begin position="125"/>
        <end position="145"/>
    </location>
</feature>
<feature type="transmembrane region" description="Helical" evidence="2">
    <location>
        <begin position="147"/>
        <end position="167"/>
    </location>
</feature>
<feature type="transmembrane region" description="Helical" evidence="2">
    <location>
        <begin position="185"/>
        <end position="205"/>
    </location>
</feature>
<feature type="transmembrane region" description="Helical" evidence="2">
    <location>
        <begin position="219"/>
        <end position="239"/>
    </location>
</feature>
<feature type="transmembrane region" description="Helical" evidence="2">
    <location>
        <begin position="258"/>
        <end position="278"/>
    </location>
</feature>
<feature type="transmembrane region" description="Helical" evidence="2">
    <location>
        <begin position="286"/>
        <end position="306"/>
    </location>
</feature>
<feature type="transmembrane region" description="Helical" evidence="2">
    <location>
        <begin position="327"/>
        <end position="347"/>
    </location>
</feature>
<feature type="transmembrane region" description="Helical" evidence="2">
    <location>
        <begin position="354"/>
        <end position="374"/>
    </location>
</feature>
<feature type="transmembrane region" description="Helical" evidence="2">
    <location>
        <begin position="396"/>
        <end position="416"/>
    </location>
</feature>
<feature type="transmembrane region" description="Helical" evidence="2">
    <location>
        <begin position="425"/>
        <end position="445"/>
    </location>
</feature>
<feature type="transmembrane region" description="Helical" evidence="2">
    <location>
        <begin position="543"/>
        <end position="563"/>
    </location>
</feature>
<feature type="transmembrane region" description="Helical" evidence="2">
    <location>
        <begin position="602"/>
        <end position="622"/>
    </location>
</feature>
<feature type="transmembrane region" description="Helical" evidence="2">
    <location>
        <begin position="717"/>
        <end position="737"/>
    </location>
</feature>
<accession>Q2VED3</accession>
<keyword id="KW-0150">Chloroplast</keyword>
<keyword id="KW-0472">Membrane</keyword>
<keyword id="KW-0520">NAD</keyword>
<keyword id="KW-0521">NADP</keyword>
<keyword id="KW-0934">Plastid</keyword>
<keyword id="KW-0618">Plastoquinone</keyword>
<keyword id="KW-0874">Quinone</keyword>
<keyword id="KW-1185">Reference proteome</keyword>
<keyword id="KW-0793">Thylakoid</keyword>
<keyword id="KW-1278">Translocase</keyword>
<keyword id="KW-0812">Transmembrane</keyword>
<keyword id="KW-1133">Transmembrane helix</keyword>
<keyword id="KW-0813">Transport</keyword>
<sequence>MEQTYEYAWIIPFIPLPVPMLIGAGLILFPTATKSFRRMWAFQSVLLLSIVMIFSIYLSIQQINSSSVYQYVWSWIINNDFSLDFGYLIDPLTSIMSILITTVGIMVLIYSDNYMAHDQGYLRFFAYMSFFSTSMLGLVTSSNLIQIYIFWELVGLCSYLLIGFWFTRPVAANACQKAFVTNRVGDFGLLLGILGFYWITGSFEFRDLFEIFNNLIYNNEVNFLFVTLCAVLLFAGAVAKSAQFPLHVWLPDAMEGPTPISALIHAATMVAAGIFLVARLLPLFRVIPYIMYLISVIGIITVLLGATLALAQKDIKRGLAYSTMSQLGYMMLALGMGSYRSALFHLITHAYSKALLFLGSGSIIHSMETIVGYSPAKSQNMGLMGGLRKHVPITKITFLLGTLSLCGIPPLACFWSKDEILNDSWLYSPIFAIIAWATAGLTAFYMFRIYLLTFEGHLNVHFQNYDGKHKTPFYSISLWGKNGVKKNSCLLTMNNNESTYFLSKTKYPIDKNGRKMTRPFMTIAHFEHKAVSSYPYESDNTMLFPIFVLGLFTLFVGAIGIPFNQEGVNLDILSKWLAPSINLLHPKSNNSQDWNEFLKDAVVSVSIAYFGIFIASFLYKPIYSSLKNLEFINSFVKKGPKRILWDKILNGIYDWSYNRAYIDAFYTRFFVGGIRGLAEFTHFFDRRVIDGMTNGVGVISFIVGEGIKYIGGGRISSYLFLYLAYVSVFLLVYYLLFST</sequence>
<comment type="function">
    <text evidence="1">NDH shuttles electrons from NAD(P)H:plastoquinone, via FMN and iron-sulfur (Fe-S) centers, to quinones in the photosynthetic chain and possibly in a chloroplast respiratory chain. The immediate electron acceptor for the enzyme in this species is believed to be plastoquinone. Couples the redox reaction to proton translocation, and thus conserves the redox energy in a proton gradient (By similarity).</text>
</comment>
<comment type="catalytic activity">
    <reaction>
        <text>a plastoquinone + NADH + (n+1) H(+)(in) = a plastoquinol + NAD(+) + n H(+)(out)</text>
        <dbReference type="Rhea" id="RHEA:42608"/>
        <dbReference type="Rhea" id="RHEA-COMP:9561"/>
        <dbReference type="Rhea" id="RHEA-COMP:9562"/>
        <dbReference type="ChEBI" id="CHEBI:15378"/>
        <dbReference type="ChEBI" id="CHEBI:17757"/>
        <dbReference type="ChEBI" id="CHEBI:57540"/>
        <dbReference type="ChEBI" id="CHEBI:57945"/>
        <dbReference type="ChEBI" id="CHEBI:62192"/>
    </reaction>
</comment>
<comment type="catalytic activity">
    <reaction>
        <text>a plastoquinone + NADPH + (n+1) H(+)(in) = a plastoquinol + NADP(+) + n H(+)(out)</text>
        <dbReference type="Rhea" id="RHEA:42612"/>
        <dbReference type="Rhea" id="RHEA-COMP:9561"/>
        <dbReference type="Rhea" id="RHEA-COMP:9562"/>
        <dbReference type="ChEBI" id="CHEBI:15378"/>
        <dbReference type="ChEBI" id="CHEBI:17757"/>
        <dbReference type="ChEBI" id="CHEBI:57783"/>
        <dbReference type="ChEBI" id="CHEBI:58349"/>
        <dbReference type="ChEBI" id="CHEBI:62192"/>
    </reaction>
</comment>
<comment type="subunit">
    <text evidence="1">NDH is composed of at least 16 different subunits, 5 of which are encoded in the nucleus.</text>
</comment>
<comment type="subcellular location">
    <subcellularLocation>
        <location evidence="1">Plastid</location>
        <location evidence="1">Chloroplast thylakoid membrane</location>
        <topology evidence="1">Multi-pass membrane protein</topology>
    </subcellularLocation>
</comment>
<comment type="similarity">
    <text evidence="3">Belongs to the complex I subunit 5 family.</text>
</comment>
<name>NU5C_SOLTU</name>
<reference key="1">
    <citation type="journal article" date="2006" name="Plant Cell Rep.">
        <title>The complete chloroplast genome sequences of Solanum tuberosum and comparative analysis with Solanaceae species identified the presence of a 241-bp deletion in cultivated potato chloroplast DNA sequence.</title>
        <authorList>
            <person name="Chung H.-J."/>
            <person name="Jung J.D."/>
            <person name="Park H.-W."/>
            <person name="Kim J.-H."/>
            <person name="Cha H.W."/>
            <person name="Min S.R."/>
            <person name="Jeong W.-J."/>
            <person name="Liu J.R."/>
        </authorList>
    </citation>
    <scope>NUCLEOTIDE SEQUENCE [LARGE SCALE GENOMIC DNA]</scope>
    <source>
        <strain>cv. Desiree</strain>
    </source>
</reference>
<reference key="2">
    <citation type="submission" date="2006-02" db="EMBL/GenBank/DDBJ databases">
        <title>Complete chloroplast genome sequences of Solanum tuberosum cultivar Desiree and comparative analyses with other Solanaceae genomes.</title>
        <authorList>
            <person name="Gargano D."/>
            <person name="Scotti N."/>
            <person name="Vezzi A."/>
            <person name="Bilardi A."/>
            <person name="Valle G."/>
            <person name="Grillo S."/>
            <person name="Cardi T."/>
        </authorList>
    </citation>
    <scope>NUCLEOTIDE SEQUENCE [LARGE SCALE GENOMIC DNA]</scope>
    <source>
        <strain>cv. Desiree</strain>
    </source>
</reference>
<organism>
    <name type="scientific">Solanum tuberosum</name>
    <name type="common">Potato</name>
    <dbReference type="NCBI Taxonomy" id="4113"/>
    <lineage>
        <taxon>Eukaryota</taxon>
        <taxon>Viridiplantae</taxon>
        <taxon>Streptophyta</taxon>
        <taxon>Embryophyta</taxon>
        <taxon>Tracheophyta</taxon>
        <taxon>Spermatophyta</taxon>
        <taxon>Magnoliopsida</taxon>
        <taxon>eudicotyledons</taxon>
        <taxon>Gunneridae</taxon>
        <taxon>Pentapetalae</taxon>
        <taxon>asterids</taxon>
        <taxon>lamiids</taxon>
        <taxon>Solanales</taxon>
        <taxon>Solanaceae</taxon>
        <taxon>Solanoideae</taxon>
        <taxon>Solaneae</taxon>
        <taxon>Solanum</taxon>
    </lineage>
</organism>
<gene>
    <name type="primary">ndhF</name>
</gene>